<proteinExistence type="inferred from homology"/>
<sequence length="109" mass="12580">MASIQFIQGVDEDIIPTVRLTRSRDGQTGTAVFRFVQPKLLQQQGEITGMYMIDEEGEIVTREVQAKFVNGQPQIIEALYVMKNAQAWERFMRFMNRYAEAKGLSFQRS</sequence>
<gene>
    <name evidence="1" type="primary">psb28</name>
    <name evidence="1" type="synonym">psbW</name>
</gene>
<feature type="chain" id="PRO_0000271556" description="Photosystem II reaction center Psb28 protein">
    <location>
        <begin position="1"/>
        <end position="109"/>
    </location>
</feature>
<comment type="subunit">
    <text evidence="1">Part of the photosystem II complex.</text>
</comment>
<comment type="subcellular location">
    <subcellularLocation>
        <location evidence="1">Plastid</location>
        <location evidence="1">Chloroplast thylakoid membrane</location>
        <topology evidence="1">Peripheral membrane protein</topology>
        <orientation evidence="1">Stromal side</orientation>
    </subcellularLocation>
</comment>
<comment type="similarity">
    <text evidence="1">Belongs to the Psb28 family.</text>
</comment>
<protein>
    <recommendedName>
        <fullName evidence="1">Photosystem II reaction center Psb28 protein</fullName>
    </recommendedName>
    <alternativeName>
        <fullName evidence="1">Photosystem II 13 kDa protein</fullName>
    </alternativeName>
    <alternativeName>
        <fullName evidence="1">Photosystem II reaction center W protein</fullName>
    </alternativeName>
</protein>
<accession>Q85G21</accession>
<reference key="1">
    <citation type="journal article" date="2003" name="DNA Res.">
        <title>Complete sequence and analysis of the plastid genome of the unicellular red alga Cyanidioschyzon merolae.</title>
        <authorList>
            <person name="Ohta N."/>
            <person name="Matsuzaki M."/>
            <person name="Misumi O."/>
            <person name="Miyagishima S.-Y."/>
            <person name="Nozaki H."/>
            <person name="Tanaka K."/>
            <person name="Shin-i T."/>
            <person name="Kohara Y."/>
            <person name="Kuroiwa T."/>
        </authorList>
    </citation>
    <scope>NUCLEOTIDE SEQUENCE [LARGE SCALE GENOMIC DNA]</scope>
    <source>
        <strain>NIES-3377 / 10D</strain>
    </source>
</reference>
<geneLocation type="chloroplast"/>
<keyword id="KW-0150">Chloroplast</keyword>
<keyword id="KW-0472">Membrane</keyword>
<keyword id="KW-0602">Photosynthesis</keyword>
<keyword id="KW-0604">Photosystem II</keyword>
<keyword id="KW-0934">Plastid</keyword>
<keyword id="KW-1185">Reference proteome</keyword>
<keyword id="KW-0793">Thylakoid</keyword>
<name>PSB28_CYAM1</name>
<evidence type="ECO:0000255" key="1">
    <source>
        <dbReference type="HAMAP-Rule" id="MF_01370"/>
    </source>
</evidence>
<dbReference type="EMBL" id="AB002583">
    <property type="protein sequence ID" value="BAC76170.1"/>
    <property type="molecule type" value="Genomic_DNA"/>
</dbReference>
<dbReference type="RefSeq" id="NP_849008.1">
    <property type="nucleotide sequence ID" value="NC_004799.1"/>
</dbReference>
<dbReference type="SMR" id="Q85G21"/>
<dbReference type="STRING" id="280699.Q85G21"/>
<dbReference type="EnsemblPlants" id="CMV089CT">
    <property type="protein sequence ID" value="CMV089CT"/>
    <property type="gene ID" value="CMV089C"/>
</dbReference>
<dbReference type="GeneID" id="844960"/>
<dbReference type="Gramene" id="CMV089CT">
    <property type="protein sequence ID" value="CMV089CT"/>
    <property type="gene ID" value="CMV089C"/>
</dbReference>
<dbReference type="KEGG" id="cme:CymeCp076"/>
<dbReference type="eggNOG" id="ENOG502RMFI">
    <property type="taxonomic scope" value="Eukaryota"/>
</dbReference>
<dbReference type="HOGENOM" id="CLU_137323_1_0_1"/>
<dbReference type="Proteomes" id="UP000007014">
    <property type="component" value="Chloroplast"/>
</dbReference>
<dbReference type="GO" id="GO:0009535">
    <property type="term" value="C:chloroplast thylakoid membrane"/>
    <property type="evidence" value="ECO:0007669"/>
    <property type="project" value="UniProtKB-SubCell"/>
</dbReference>
<dbReference type="GO" id="GO:0009523">
    <property type="term" value="C:photosystem II"/>
    <property type="evidence" value="ECO:0007669"/>
    <property type="project" value="UniProtKB-KW"/>
</dbReference>
<dbReference type="GO" id="GO:0015979">
    <property type="term" value="P:photosynthesis"/>
    <property type="evidence" value="ECO:0007669"/>
    <property type="project" value="UniProtKB-UniRule"/>
</dbReference>
<dbReference type="Gene3D" id="2.40.30.220">
    <property type="entry name" value="Photosystem II Psb28"/>
    <property type="match status" value="1"/>
</dbReference>
<dbReference type="HAMAP" id="MF_01370">
    <property type="entry name" value="PSII_Psb28"/>
    <property type="match status" value="1"/>
</dbReference>
<dbReference type="InterPro" id="IPR038676">
    <property type="entry name" value="Psb28_c1_sf"/>
</dbReference>
<dbReference type="InterPro" id="IPR005610">
    <property type="entry name" value="PSII_Psb28_class-1"/>
</dbReference>
<dbReference type="NCBIfam" id="TIGR03047">
    <property type="entry name" value="PS_II_psb28"/>
    <property type="match status" value="1"/>
</dbReference>
<dbReference type="PANTHER" id="PTHR34963">
    <property type="match status" value="1"/>
</dbReference>
<dbReference type="PANTHER" id="PTHR34963:SF2">
    <property type="entry name" value="PHOTOSYSTEM II REACTION CENTER PSB28 PROTEIN, CHLOROPLASTIC"/>
    <property type="match status" value="1"/>
</dbReference>
<dbReference type="Pfam" id="PF03912">
    <property type="entry name" value="Psb28"/>
    <property type="match status" value="1"/>
</dbReference>
<organism>
    <name type="scientific">Cyanidioschyzon merolae (strain NIES-3377 / 10D)</name>
    <name type="common">Unicellular red alga</name>
    <dbReference type="NCBI Taxonomy" id="280699"/>
    <lineage>
        <taxon>Eukaryota</taxon>
        <taxon>Rhodophyta</taxon>
        <taxon>Bangiophyceae</taxon>
        <taxon>Cyanidiales</taxon>
        <taxon>Cyanidiaceae</taxon>
        <taxon>Cyanidioschyzon</taxon>
    </lineage>
</organism>